<gene>
    <name type="primary">PCMTD1</name>
</gene>
<sequence length="356" mass="40474">MGGAVSAGEDNDDLIDNLKEAQYIRTERVEQAFRAIDRGDYYLEGYRDNAYKDLAWKHGNIHLSAPCIYSEVMEALKLQPGLSFLNLGSGTGYLSTMVGLILGPFGINHGIELHSDVVEYAKEKLESFIKNSDSFDKFEFCEPAFVVGNCLQIASDSHQYDRIYCGAGVQKDHENYMKILLKVGGILVMPIEDQLTQIMRTGQNTWESKNILAVSFAPLVQPSKNDNGKPDSVGLPPCAVRNLQDLARIYIRRTLRNFINDEMQAKGIPQRAPPKRKRKRVKQRINTYVFVGNQLIPQPLDSEEDEKMEEDKEEEEKEPGEALKPEEPPQNLLREKIMKLPLPESLKAYLTYFREK</sequence>
<keyword id="KW-0963">Cytoplasm</keyword>
<keyword id="KW-0449">Lipoprotein</keyword>
<keyword id="KW-0472">Membrane</keyword>
<keyword id="KW-0519">Myristate</keyword>
<keyword id="KW-1185">Reference proteome</keyword>
<protein>
    <recommendedName>
        <fullName>Protein-L-isoaspartate O-methyltransferase domain-containing protein 1</fullName>
    </recommendedName>
</protein>
<dbReference type="EMBL" id="BC133335">
    <property type="protein sequence ID" value="AAI33336.1"/>
    <property type="molecule type" value="mRNA"/>
</dbReference>
<dbReference type="RefSeq" id="NP_001074995.1">
    <property type="nucleotide sequence ID" value="NM_001081526.1"/>
</dbReference>
<dbReference type="RefSeq" id="XP_005215466.1">
    <property type="nucleotide sequence ID" value="XM_005215409.3"/>
</dbReference>
<dbReference type="RefSeq" id="XP_005215467.1">
    <property type="nucleotide sequence ID" value="XM_005215410.1"/>
</dbReference>
<dbReference type="RefSeq" id="XP_024857344.1">
    <property type="nucleotide sequence ID" value="XM_025001576.2"/>
</dbReference>
<dbReference type="RefSeq" id="XP_059749231.1">
    <property type="nucleotide sequence ID" value="XM_059893248.1"/>
</dbReference>
<dbReference type="RefSeq" id="XP_059749232.1">
    <property type="nucleotide sequence ID" value="XM_059893249.1"/>
</dbReference>
<dbReference type="RefSeq" id="XP_059749233.1">
    <property type="nucleotide sequence ID" value="XM_059893250.1"/>
</dbReference>
<dbReference type="SMR" id="A2VDP2"/>
<dbReference type="FunCoup" id="A2VDP2">
    <property type="interactions" value="575"/>
</dbReference>
<dbReference type="STRING" id="9913.ENSBTAP00000023247"/>
<dbReference type="PaxDb" id="9913-ENSBTAP00000023247"/>
<dbReference type="Ensembl" id="ENSBTAT00000023247.4">
    <property type="protein sequence ID" value="ENSBTAP00000023247.3"/>
    <property type="gene ID" value="ENSBTAG00000017492.5"/>
</dbReference>
<dbReference type="GeneID" id="521261"/>
<dbReference type="KEGG" id="bta:521261"/>
<dbReference type="CTD" id="115294"/>
<dbReference type="VEuPathDB" id="HostDB:ENSBTAG00000017492"/>
<dbReference type="VGNC" id="VGNC:53871">
    <property type="gene designation" value="PCMTD1"/>
</dbReference>
<dbReference type="eggNOG" id="KOG1661">
    <property type="taxonomic scope" value="Eukaryota"/>
</dbReference>
<dbReference type="GeneTree" id="ENSGT00950000183032"/>
<dbReference type="HOGENOM" id="CLU_029295_0_0_1"/>
<dbReference type="InParanoid" id="A2VDP2"/>
<dbReference type="OMA" id="QSTWDSR"/>
<dbReference type="OrthoDB" id="10257972at2759"/>
<dbReference type="TreeFam" id="TF329329"/>
<dbReference type="Proteomes" id="UP000009136">
    <property type="component" value="Chromosome 14"/>
</dbReference>
<dbReference type="Bgee" id="ENSBTAG00000017492">
    <property type="expression patterns" value="Expressed in oviduct epithelium and 105 other cell types or tissues"/>
</dbReference>
<dbReference type="GO" id="GO:0031466">
    <property type="term" value="C:Cul5-RING ubiquitin ligase complex"/>
    <property type="evidence" value="ECO:0000250"/>
    <property type="project" value="UniProtKB"/>
</dbReference>
<dbReference type="GO" id="GO:0005737">
    <property type="term" value="C:cytoplasm"/>
    <property type="evidence" value="ECO:0000318"/>
    <property type="project" value="GO_Central"/>
</dbReference>
<dbReference type="GO" id="GO:0016020">
    <property type="term" value="C:membrane"/>
    <property type="evidence" value="ECO:0007669"/>
    <property type="project" value="UniProtKB-SubCell"/>
</dbReference>
<dbReference type="GO" id="GO:0004719">
    <property type="term" value="F:protein-L-isoaspartate (D-aspartate) O-methyltransferase activity"/>
    <property type="evidence" value="ECO:0000318"/>
    <property type="project" value="GO_Central"/>
</dbReference>
<dbReference type="GO" id="GO:1990756">
    <property type="term" value="F:ubiquitin-like ligase-substrate adaptor activity"/>
    <property type="evidence" value="ECO:0000250"/>
    <property type="project" value="UniProtKB"/>
</dbReference>
<dbReference type="GO" id="GO:0016567">
    <property type="term" value="P:protein ubiquitination"/>
    <property type="evidence" value="ECO:0000250"/>
    <property type="project" value="UniProtKB"/>
</dbReference>
<dbReference type="FunFam" id="3.40.50.150:FF:000015">
    <property type="entry name" value="Protein-L-isoaspartate (D-aspartate) O-methyltransferase domain-containing 1"/>
    <property type="match status" value="1"/>
</dbReference>
<dbReference type="Gene3D" id="3.40.50.150">
    <property type="entry name" value="Vaccinia Virus protein VP39"/>
    <property type="match status" value="1"/>
</dbReference>
<dbReference type="InterPro" id="IPR000682">
    <property type="entry name" value="PCMT"/>
</dbReference>
<dbReference type="InterPro" id="IPR029063">
    <property type="entry name" value="SAM-dependent_MTases_sf"/>
</dbReference>
<dbReference type="PANTHER" id="PTHR11579">
    <property type="entry name" value="PROTEIN-L-ISOASPARTATE O-METHYLTRANSFERASE"/>
    <property type="match status" value="1"/>
</dbReference>
<dbReference type="PANTHER" id="PTHR11579:SF4">
    <property type="entry name" value="PROTEIN-L-ISOASPARTATE O-METHYLTRANSFERASE DOMAIN-CONTAINING PROTEIN 1"/>
    <property type="match status" value="1"/>
</dbReference>
<dbReference type="Pfam" id="PF01135">
    <property type="entry name" value="PCMT"/>
    <property type="match status" value="1"/>
</dbReference>
<dbReference type="SUPFAM" id="SSF53335">
    <property type="entry name" value="S-adenosyl-L-methionine-dependent methyltransferases"/>
    <property type="match status" value="1"/>
</dbReference>
<reference key="1">
    <citation type="submission" date="2007-02" db="EMBL/GenBank/DDBJ databases">
        <authorList>
            <consortium name="NIH - Mammalian Gene Collection (MGC) project"/>
        </authorList>
    </citation>
    <scope>NUCLEOTIDE SEQUENCE [LARGE SCALE MRNA]</scope>
    <source>
        <strain>Hereford</strain>
        <tissue>Basal ganglia</tissue>
    </source>
</reference>
<name>PCMD1_BOVIN</name>
<feature type="initiator methionine" description="Removed" evidence="3">
    <location>
        <position position="1"/>
    </location>
</feature>
<feature type="chain" id="PRO_0000293539" description="Protein-L-isoaspartate O-methyltransferase domain-containing protein 1">
    <location>
        <begin position="2"/>
        <end position="356"/>
    </location>
</feature>
<feature type="region of interest" description="AdoMet binding motif" evidence="3">
    <location>
        <begin position="85"/>
        <end position="94"/>
    </location>
</feature>
<feature type="region of interest" description="AdoMet binding motif" evidence="3">
    <location>
        <begin position="160"/>
        <end position="164"/>
    </location>
</feature>
<feature type="region of interest" description="AdoMet binding motif" evidence="3">
    <location>
        <begin position="181"/>
        <end position="191"/>
    </location>
</feature>
<feature type="region of interest" description="BC-box" evidence="3">
    <location>
        <begin position="240"/>
        <end position="250"/>
    </location>
</feature>
<feature type="region of interest" description="Disordered" evidence="4">
    <location>
        <begin position="299"/>
        <end position="331"/>
    </location>
</feature>
<feature type="region of interest" description="CUL-box" evidence="3">
    <location>
        <begin position="340"/>
        <end position="343"/>
    </location>
</feature>
<feature type="compositionally biased region" description="Acidic residues" evidence="4">
    <location>
        <begin position="301"/>
        <end position="318"/>
    </location>
</feature>
<feature type="compositionally biased region" description="Basic and acidic residues" evidence="4">
    <location>
        <begin position="319"/>
        <end position="331"/>
    </location>
</feature>
<feature type="active site" evidence="2">
    <location>
        <position position="64"/>
    </location>
</feature>
<feature type="lipid moiety-binding region" description="N-myristoyl glycine" evidence="3">
    <location>
        <position position="2"/>
    </location>
</feature>
<accession>A2VDP2</accession>
<comment type="function">
    <text evidence="3">Substrate recognition component of an ECS (Elongin BC-CUL5-SOCS-box protein) E3 ubiquitin ligase complex which mediates the ubiquitination and subsequent proteasomal degradation of target proteins. Specifically binds to the methyltransferase cofactor S-adenosylmethionine (AdoMet) via the N-terminal AdoMet binding motif, but does not display methyltransferase activity. May provide an alternate maintenance pathway for modified proteins by acting as a damage-specific E3 ubiquitin ligase adaptor protein.</text>
</comment>
<comment type="subunit">
    <text evidence="3">Component of the probable ECS(PCMTD1) E3 ubiquitin-protein ligase complex, at least composed of CUL5, ELOB, ELOC, RBX2 and PCMTD1. Interacts (via the BC-box) with ELOB and ELOC; the interaction is direct and stabilizes PCMTD1.</text>
</comment>
<comment type="subcellular location">
    <subcellularLocation>
        <location evidence="1">Cytoplasm</location>
    </subcellularLocation>
    <subcellularLocation>
        <location evidence="3">Membrane</location>
        <topology evidence="3">Lipid-anchor</topology>
    </subcellularLocation>
</comment>
<comment type="domain">
    <text evidence="3">At its N-terminus, contains L-isoaspartate and S-adenosylmethionine (AdoMet) binding motifs. Also contains an extended SOCS box motif, where the Cul-box is separated from the BC-box by ~90 residues, within its C-terminus.</text>
</comment>
<comment type="similarity">
    <text evidence="5">Belongs to the methyltransferase superfamily. L-isoaspartyl/D-aspartyl protein methyltransferase family.</text>
</comment>
<comment type="caution">
    <text evidence="3">Although the active site residue Ser is conserved, appears to lack catalytic activity in vitro.</text>
</comment>
<evidence type="ECO:0000250" key="1">
    <source>
        <dbReference type="UniProtKB" id="P22061"/>
    </source>
</evidence>
<evidence type="ECO:0000250" key="2">
    <source>
        <dbReference type="UniProtKB" id="Q27869"/>
    </source>
</evidence>
<evidence type="ECO:0000250" key="3">
    <source>
        <dbReference type="UniProtKB" id="Q96MG8"/>
    </source>
</evidence>
<evidence type="ECO:0000256" key="4">
    <source>
        <dbReference type="SAM" id="MobiDB-lite"/>
    </source>
</evidence>
<evidence type="ECO:0000305" key="5"/>
<proteinExistence type="evidence at transcript level"/>
<organism>
    <name type="scientific">Bos taurus</name>
    <name type="common">Bovine</name>
    <dbReference type="NCBI Taxonomy" id="9913"/>
    <lineage>
        <taxon>Eukaryota</taxon>
        <taxon>Metazoa</taxon>
        <taxon>Chordata</taxon>
        <taxon>Craniata</taxon>
        <taxon>Vertebrata</taxon>
        <taxon>Euteleostomi</taxon>
        <taxon>Mammalia</taxon>
        <taxon>Eutheria</taxon>
        <taxon>Laurasiatheria</taxon>
        <taxon>Artiodactyla</taxon>
        <taxon>Ruminantia</taxon>
        <taxon>Pecora</taxon>
        <taxon>Bovidae</taxon>
        <taxon>Bovinae</taxon>
        <taxon>Bos</taxon>
    </lineage>
</organism>